<organism>
    <name type="scientific">Arabidopsis thaliana</name>
    <name type="common">Mouse-ear cress</name>
    <dbReference type="NCBI Taxonomy" id="3702"/>
    <lineage>
        <taxon>Eukaryota</taxon>
        <taxon>Viridiplantae</taxon>
        <taxon>Streptophyta</taxon>
        <taxon>Embryophyta</taxon>
        <taxon>Tracheophyta</taxon>
        <taxon>Spermatophyta</taxon>
        <taxon>Magnoliopsida</taxon>
        <taxon>eudicotyledons</taxon>
        <taxon>Gunneridae</taxon>
        <taxon>Pentapetalae</taxon>
        <taxon>rosids</taxon>
        <taxon>malvids</taxon>
        <taxon>Brassicales</taxon>
        <taxon>Brassicaceae</taxon>
        <taxon>Camelineae</taxon>
        <taxon>Arabidopsis</taxon>
    </lineage>
</organism>
<protein>
    <recommendedName>
        <fullName>Transcription factor UNE10</fullName>
    </recommendedName>
    <alternativeName>
        <fullName evidence="8">Basic helix-loop-helix protein 16</fullName>
        <shortName evidence="8">AtbHLH16</shortName>
        <shortName evidence="8">bHLH 16</shortName>
    </alternativeName>
    <alternativeName>
        <fullName evidence="11 12">Phytochrome-interacting factor 8</fullName>
    </alternativeName>
    <alternativeName>
        <fullName evidence="10">Protein UNFERTILIZED EMBRYO SAC 10</fullName>
    </alternativeName>
    <alternativeName>
        <fullName evidence="9">Transcription factor EN 108</fullName>
    </alternativeName>
    <alternativeName>
        <fullName evidence="8">bHLH transcription factor bHLH016</fullName>
    </alternativeName>
</protein>
<gene>
    <name evidence="10" type="primary">UNE10</name>
    <name evidence="8" type="synonym">BHLH16</name>
    <name evidence="9" type="synonym">EN108</name>
    <name evidence="11 12" type="synonym">PIF8</name>
    <name evidence="14" type="ordered locus">At4g00050</name>
    <name evidence="15" type="ORF">F6N15.11</name>
</gene>
<keyword id="KW-0238">DNA-binding</keyword>
<keyword id="KW-0539">Nucleus</keyword>
<keyword id="KW-1185">Reference proteome</keyword>
<keyword id="KW-0804">Transcription</keyword>
<keyword id="KW-0805">Transcription regulation</keyword>
<keyword id="KW-0832">Ubl conjugation</keyword>
<name>UNE10_ARATH</name>
<feature type="chain" id="PRO_0000358830" description="Transcription factor UNE10">
    <location>
        <begin position="1"/>
        <end position="399"/>
    </location>
</feature>
<feature type="domain" description="bHLH" evidence="1">
    <location>
        <begin position="213"/>
        <end position="262"/>
    </location>
</feature>
<feature type="region of interest" description="Disordered" evidence="2">
    <location>
        <begin position="119"/>
        <end position="158"/>
    </location>
</feature>
<feature type="region of interest" description="Disordered" evidence="2">
    <location>
        <begin position="173"/>
        <end position="228"/>
    </location>
</feature>
<feature type="compositionally biased region" description="Basic and acidic residues" evidence="2">
    <location>
        <begin position="178"/>
        <end position="201"/>
    </location>
</feature>
<feature type="sequence conflict" description="In Ref. 1; AAM10933." evidence="13" ref="1">
    <original>Q</original>
    <variation>R</variation>
    <location>
        <position position="390"/>
    </location>
</feature>
<comment type="function">
    <text evidence="4 7">Transcription factor binding to G-box elements (5'-CACGTG-3') in target genes promoters, particularly in far-red light but barely in the dark (PubMed:31732705). Required during the fertilization of ovules by pollen (PubMed:15634699). Repressor of phytochrome A-mediated far-red light responses including seed germination, suppression of hypocotyl elongation, and randomization of hypocotyl growth orientation (PubMed:31732705). Does not inhibit phyB-induced red light responses (PubMed:31732705).</text>
</comment>
<comment type="activity regulation">
    <text evidence="7">Stabilized by phyA but destabilized by phyB (PubMed:31732705). Accumulates in the dark but not in far-red light upon MG132 treatment, a 26S proteasome inhibitor (at protein level) (PubMed:31732705).</text>
</comment>
<comment type="subunit">
    <text evidence="6 7 13">Homodimer (Probable). Associates to PTAC12/HMR/PAP5 which acts as a transcriptional coactivator (PubMed:25944101). Interacts with the Pfr form of phyB but barely with that of phyA (PubMed:31732705). Binds to COP1 (PubMed:31732705).</text>
</comment>
<comment type="subcellular location">
    <subcellularLocation>
        <location evidence="1">Nucleus</location>
    </subcellularLocation>
</comment>
<comment type="tissue specificity">
    <text evidence="3 5">Mainly expressed in stems, leaves, seedlings, fruits and flowers, and, to a lower extent, in roots.</text>
</comment>
<comment type="developmental stage">
    <text evidence="5">Expressed transiently in early developing seeds, later present at low levels in maturating seeds until dry seeds (PubMed:23708772). Observed during seed imbibition (PubMed:23708772).</text>
</comment>
<comment type="induction">
    <text evidence="3 5 7">By cold treatment (PubMed:12679534). Down-regulated by jasmonic acid (MJ) (PubMed:23708772). Accumulates in far-red light more than in darkness and red light; this profile requires COP1-triggered protein degradation in darkness, phyA inhibition of COP1 in far-red light, and phyB-mediated protein degradation in red light (PubMed:31732705). Follows a free-running robust circadian rhythm, with higher levels during the dark (PubMed:23708772).</text>
</comment>
<comment type="PTM">
    <text evidence="7">Ubiquitinated and subsequently targeted to protein degradation by COP1 in the dark, but not in far-red light.</text>
</comment>
<comment type="disruption phenotype">
    <text evidence="4">Plants exhibit unfertilized ovules but normal pollen tube attraction.</text>
</comment>
<comment type="sequence caution" evidence="13">
    <conflict type="erroneous gene model prediction">
        <sequence resource="EMBL-CDS" id="AAC19308"/>
    </conflict>
</comment>
<comment type="sequence caution" evidence="13">
    <conflict type="erroneous gene model prediction">
        <sequence resource="EMBL-CDS" id="CAB80763"/>
    </conflict>
</comment>
<reference key="1">
    <citation type="journal article" date="2003" name="Mol. Biol. Evol.">
        <title>The basic helix-loop-helix transcription factor family in plants: a genome-wide study of protein structure and functional diversity.</title>
        <authorList>
            <person name="Heim M.A."/>
            <person name="Jakoby M."/>
            <person name="Werber M."/>
            <person name="Martin C."/>
            <person name="Weisshaar B."/>
            <person name="Bailey P.C."/>
        </authorList>
    </citation>
    <scope>NUCLEOTIDE SEQUENCE [MRNA]</scope>
    <scope>TISSUE SPECIFICITY</scope>
    <scope>INDUCTION BY COLD</scope>
    <scope>GENE FAMILY</scope>
    <scope>NOMENCLATURE</scope>
    <source>
        <strain>cv. Columbia</strain>
        <tissue>Flower</tissue>
    </source>
</reference>
<reference key="2">
    <citation type="journal article" date="1999" name="Nature">
        <title>Sequence and analysis of chromosome 4 of the plant Arabidopsis thaliana.</title>
        <authorList>
            <person name="Mayer K.F.X."/>
            <person name="Schueller C."/>
            <person name="Wambutt R."/>
            <person name="Murphy G."/>
            <person name="Volckaert G."/>
            <person name="Pohl T."/>
            <person name="Duesterhoeft A."/>
            <person name="Stiekema W."/>
            <person name="Entian K.-D."/>
            <person name="Terryn N."/>
            <person name="Harris B."/>
            <person name="Ansorge W."/>
            <person name="Brandt P."/>
            <person name="Grivell L.A."/>
            <person name="Rieger M."/>
            <person name="Weichselgartner M."/>
            <person name="de Simone V."/>
            <person name="Obermaier B."/>
            <person name="Mache R."/>
            <person name="Mueller M."/>
            <person name="Kreis M."/>
            <person name="Delseny M."/>
            <person name="Puigdomenech P."/>
            <person name="Watson M."/>
            <person name="Schmidtheini T."/>
            <person name="Reichert B."/>
            <person name="Portetelle D."/>
            <person name="Perez-Alonso M."/>
            <person name="Boutry M."/>
            <person name="Bancroft I."/>
            <person name="Vos P."/>
            <person name="Hoheisel J."/>
            <person name="Zimmermann W."/>
            <person name="Wedler H."/>
            <person name="Ridley P."/>
            <person name="Langham S.-A."/>
            <person name="McCullagh B."/>
            <person name="Bilham L."/>
            <person name="Robben J."/>
            <person name="van der Schueren J."/>
            <person name="Grymonprez B."/>
            <person name="Chuang Y.-J."/>
            <person name="Vandenbussche F."/>
            <person name="Braeken M."/>
            <person name="Weltjens I."/>
            <person name="Voet M."/>
            <person name="Bastiaens I."/>
            <person name="Aert R."/>
            <person name="Defoor E."/>
            <person name="Weitzenegger T."/>
            <person name="Bothe G."/>
            <person name="Ramsperger U."/>
            <person name="Hilbert H."/>
            <person name="Braun M."/>
            <person name="Holzer E."/>
            <person name="Brandt A."/>
            <person name="Peters S."/>
            <person name="van Staveren M."/>
            <person name="Dirkse W."/>
            <person name="Mooijman P."/>
            <person name="Klein Lankhorst R."/>
            <person name="Rose M."/>
            <person name="Hauf J."/>
            <person name="Koetter P."/>
            <person name="Berneiser S."/>
            <person name="Hempel S."/>
            <person name="Feldpausch M."/>
            <person name="Lamberth S."/>
            <person name="Van den Daele H."/>
            <person name="De Keyser A."/>
            <person name="Buysshaert C."/>
            <person name="Gielen J."/>
            <person name="Villarroel R."/>
            <person name="De Clercq R."/>
            <person name="van Montagu M."/>
            <person name="Rogers J."/>
            <person name="Cronin A."/>
            <person name="Quail M.A."/>
            <person name="Bray-Allen S."/>
            <person name="Clark L."/>
            <person name="Doggett J."/>
            <person name="Hall S."/>
            <person name="Kay M."/>
            <person name="Lennard N."/>
            <person name="McLay K."/>
            <person name="Mayes R."/>
            <person name="Pettett A."/>
            <person name="Rajandream M.A."/>
            <person name="Lyne M."/>
            <person name="Benes V."/>
            <person name="Rechmann S."/>
            <person name="Borkova D."/>
            <person name="Bloecker H."/>
            <person name="Scharfe M."/>
            <person name="Grimm M."/>
            <person name="Loehnert T.-H."/>
            <person name="Dose S."/>
            <person name="de Haan M."/>
            <person name="Maarse A.C."/>
            <person name="Schaefer M."/>
            <person name="Mueller-Auer S."/>
            <person name="Gabel C."/>
            <person name="Fuchs M."/>
            <person name="Fartmann B."/>
            <person name="Granderath K."/>
            <person name="Dauner D."/>
            <person name="Herzl A."/>
            <person name="Neumann S."/>
            <person name="Argiriou A."/>
            <person name="Vitale D."/>
            <person name="Liguori R."/>
            <person name="Piravandi E."/>
            <person name="Massenet O."/>
            <person name="Quigley F."/>
            <person name="Clabauld G."/>
            <person name="Muendlein A."/>
            <person name="Felber R."/>
            <person name="Schnabl S."/>
            <person name="Hiller R."/>
            <person name="Schmidt W."/>
            <person name="Lecharny A."/>
            <person name="Aubourg S."/>
            <person name="Chefdor F."/>
            <person name="Cooke R."/>
            <person name="Berger C."/>
            <person name="Monfort A."/>
            <person name="Casacuberta E."/>
            <person name="Gibbons T."/>
            <person name="Weber N."/>
            <person name="Vandenbol M."/>
            <person name="Bargues M."/>
            <person name="Terol J."/>
            <person name="Torres A."/>
            <person name="Perez-Perez A."/>
            <person name="Purnelle B."/>
            <person name="Bent E."/>
            <person name="Johnson S."/>
            <person name="Tacon D."/>
            <person name="Jesse T."/>
            <person name="Heijnen L."/>
            <person name="Schwarz S."/>
            <person name="Scholler P."/>
            <person name="Heber S."/>
            <person name="Francs P."/>
            <person name="Bielke C."/>
            <person name="Frishman D."/>
            <person name="Haase D."/>
            <person name="Lemcke K."/>
            <person name="Mewes H.-W."/>
            <person name="Stocker S."/>
            <person name="Zaccaria P."/>
            <person name="Bevan M."/>
            <person name="Wilson R.K."/>
            <person name="de la Bastide M."/>
            <person name="Habermann K."/>
            <person name="Parnell L."/>
            <person name="Dedhia N."/>
            <person name="Gnoj L."/>
            <person name="Schutz K."/>
            <person name="Huang E."/>
            <person name="Spiegel L."/>
            <person name="Sekhon M."/>
            <person name="Murray J."/>
            <person name="Sheet P."/>
            <person name="Cordes M."/>
            <person name="Abu-Threideh J."/>
            <person name="Stoneking T."/>
            <person name="Kalicki J."/>
            <person name="Graves T."/>
            <person name="Harmon G."/>
            <person name="Edwards J."/>
            <person name="Latreille P."/>
            <person name="Courtney L."/>
            <person name="Cloud J."/>
            <person name="Abbott A."/>
            <person name="Scott K."/>
            <person name="Johnson D."/>
            <person name="Minx P."/>
            <person name="Bentley D."/>
            <person name="Fulton B."/>
            <person name="Miller N."/>
            <person name="Greco T."/>
            <person name="Kemp K."/>
            <person name="Kramer J."/>
            <person name="Fulton L."/>
            <person name="Mardis E."/>
            <person name="Dante M."/>
            <person name="Pepin K."/>
            <person name="Hillier L.W."/>
            <person name="Nelson J."/>
            <person name="Spieth J."/>
            <person name="Ryan E."/>
            <person name="Andrews S."/>
            <person name="Geisel C."/>
            <person name="Layman D."/>
            <person name="Du H."/>
            <person name="Ali J."/>
            <person name="Berghoff A."/>
            <person name="Jones K."/>
            <person name="Drone K."/>
            <person name="Cotton M."/>
            <person name="Joshu C."/>
            <person name="Antonoiu B."/>
            <person name="Zidanic M."/>
            <person name="Strong C."/>
            <person name="Sun H."/>
            <person name="Lamar B."/>
            <person name="Yordan C."/>
            <person name="Ma P."/>
            <person name="Zhong J."/>
            <person name="Preston R."/>
            <person name="Vil D."/>
            <person name="Shekher M."/>
            <person name="Matero A."/>
            <person name="Shah R."/>
            <person name="Swaby I.K."/>
            <person name="O'Shaughnessy A."/>
            <person name="Rodriguez M."/>
            <person name="Hoffman J."/>
            <person name="Till S."/>
            <person name="Granat S."/>
            <person name="Shohdy N."/>
            <person name="Hasegawa A."/>
            <person name="Hameed A."/>
            <person name="Lodhi M."/>
            <person name="Johnson A."/>
            <person name="Chen E."/>
            <person name="Marra M.A."/>
            <person name="Martienssen R."/>
            <person name="McCombie W.R."/>
        </authorList>
    </citation>
    <scope>NUCLEOTIDE SEQUENCE [LARGE SCALE GENOMIC DNA]</scope>
    <source>
        <strain>cv. Columbia</strain>
    </source>
</reference>
<reference key="3">
    <citation type="journal article" date="2017" name="Plant J.">
        <title>Araport11: a complete reannotation of the Arabidopsis thaliana reference genome.</title>
        <authorList>
            <person name="Cheng C.Y."/>
            <person name="Krishnakumar V."/>
            <person name="Chan A.P."/>
            <person name="Thibaud-Nissen F."/>
            <person name="Schobel S."/>
            <person name="Town C.D."/>
        </authorList>
    </citation>
    <scope>GENOME REANNOTATION</scope>
    <source>
        <strain>cv. Columbia</strain>
    </source>
</reference>
<reference key="4">
    <citation type="journal article" date="2002" name="Science">
        <title>Functional annotation of a full-length Arabidopsis cDNA collection.</title>
        <authorList>
            <person name="Seki M."/>
            <person name="Narusaka M."/>
            <person name="Kamiya A."/>
            <person name="Ishida J."/>
            <person name="Satou M."/>
            <person name="Sakurai T."/>
            <person name="Nakajima M."/>
            <person name="Enju A."/>
            <person name="Akiyama K."/>
            <person name="Oono Y."/>
            <person name="Muramatsu M."/>
            <person name="Hayashizaki Y."/>
            <person name="Kawai J."/>
            <person name="Carninci P."/>
            <person name="Itoh M."/>
            <person name="Ishii Y."/>
            <person name="Arakawa T."/>
            <person name="Shibata K."/>
            <person name="Shinagawa A."/>
            <person name="Shinozaki K."/>
        </authorList>
    </citation>
    <scope>NUCLEOTIDE SEQUENCE [LARGE SCALE MRNA]</scope>
    <source>
        <strain>cv. Columbia</strain>
    </source>
</reference>
<reference key="5">
    <citation type="submission" date="2006-06" db="EMBL/GenBank/DDBJ databases">
        <title>Arabidopsis ORF clones.</title>
        <authorList>
            <person name="Shinn P."/>
            <person name="Chen H."/>
            <person name="Kim C.J."/>
            <person name="Quinitio C."/>
            <person name="Ecker J.R."/>
        </authorList>
    </citation>
    <scope>NUCLEOTIDE SEQUENCE [LARGE SCALE MRNA]</scope>
    <source>
        <strain>cv. Columbia</strain>
    </source>
</reference>
<reference key="6">
    <citation type="journal article" date="2003" name="Plant Cell">
        <title>The Arabidopsis basic/helix-loop-helix transcription factor family.</title>
        <authorList>
            <person name="Toledo-Ortiz G."/>
            <person name="Huq E."/>
            <person name="Quail P.H."/>
        </authorList>
    </citation>
    <scope>GENE FAMILY</scope>
</reference>
<reference key="7">
    <citation type="journal article" date="2003" name="Plant Cell">
        <title>Update on the basic helix-loop-helix transcription factor gene family in Arabidopsis thaliana.</title>
        <authorList>
            <person name="Bailey P.C."/>
            <person name="Martin C."/>
            <person name="Toledo-Ortiz G."/>
            <person name="Quail P.H."/>
            <person name="Huq E."/>
            <person name="Heim M.A."/>
            <person name="Jakoby M."/>
            <person name="Werber M."/>
            <person name="Weisshaar B."/>
        </authorList>
    </citation>
    <scope>GENE FAMILY</scope>
    <scope>NOMENCLATURE</scope>
</reference>
<reference key="8">
    <citation type="journal article" date="2005" name="Development">
        <title>Genetic and molecular identification of genes required for female gametophyte development and function in Arabidopsis.</title>
        <authorList>
            <person name="Pagnussat G.C."/>
            <person name="Yu H.-J."/>
            <person name="Ngo Q.A."/>
            <person name="Rajani S."/>
            <person name="Mayalagu S."/>
            <person name="Johnson C.S."/>
            <person name="Capron A."/>
            <person name="Xie L.-F."/>
            <person name="Ye D."/>
            <person name="Sundaresan V."/>
        </authorList>
    </citation>
    <scope>FUNCTION</scope>
    <scope>DISRUPTION PHENOTYPE</scope>
</reference>
<reference key="9">
    <citation type="journal article" date="2013" name="Mol. Cells">
        <title>Phytochrome-interacting factors have both shared and distinct biological roles.</title>
        <authorList>
            <person name="Jeong J."/>
            <person name="Choi G."/>
        </authorList>
    </citation>
    <scope>TISSUE SPECIFICITY</scope>
    <scope>DEVELOPMENTAL STAGE</scope>
    <scope>INDUCTION BY JASMONIC ACID</scope>
    <scope>GENE FAMILY</scope>
    <scope>NOMENCLATURE</scope>
    <scope>REVIEW</scope>
</reference>
<reference key="10">
    <citation type="journal article" date="2015" name="Plant Cell">
        <title>HEMERA couples the proteolysis and transcriptional activity of PHYTOCHROME INTERACTING FACTORs in Arabidopsis photomorphogenesis.</title>
        <authorList>
            <person name="Qiu Y."/>
            <person name="Li M."/>
            <person name="Pasoreck E.K."/>
            <person name="Long L."/>
            <person name="Shi Y."/>
            <person name="Galvao R.M."/>
            <person name="Chou C.L."/>
            <person name="Wang H."/>
            <person name="Sun A.Y."/>
            <person name="Zhang Y.C."/>
            <person name="Jiang A."/>
            <person name="Chen M."/>
        </authorList>
    </citation>
    <scope>SUBUNIT</scope>
    <scope>INTERACTION WITH PTAC12/HMR/PAP5</scope>
    <source>
        <strain>cv. Columbia</strain>
    </source>
</reference>
<reference key="11">
    <citation type="journal article" date="2020" name="Plant Cell">
        <title>PHYTOCHROME INTERACTING FACTOR8 inhibits phytochrome a-mediated far-red light responses in Arabidopsis.</title>
        <authorList>
            <person name="Oh J."/>
            <person name="Park E."/>
            <person name="Song K."/>
            <person name="Bae G."/>
            <person name="Choi G."/>
        </authorList>
    </citation>
    <scope>FUNCTION</scope>
    <scope>INTERACTION WITH PHYB AND COP1</scope>
    <scope>INDUCTION BY FAR-RED LIGHT</scope>
    <scope>ACTIVITY REGULATION</scope>
    <scope>UBIQUITINATION</scope>
    <source>
        <strain>cv. Columbia</strain>
    </source>
</reference>
<proteinExistence type="evidence at protein level"/>
<evidence type="ECO:0000255" key="1">
    <source>
        <dbReference type="PROSITE-ProRule" id="PRU00981"/>
    </source>
</evidence>
<evidence type="ECO:0000256" key="2">
    <source>
        <dbReference type="SAM" id="MobiDB-lite"/>
    </source>
</evidence>
<evidence type="ECO:0000269" key="3">
    <source>
    </source>
</evidence>
<evidence type="ECO:0000269" key="4">
    <source>
    </source>
</evidence>
<evidence type="ECO:0000269" key="5">
    <source>
    </source>
</evidence>
<evidence type="ECO:0000269" key="6">
    <source>
    </source>
</evidence>
<evidence type="ECO:0000269" key="7">
    <source>
    </source>
</evidence>
<evidence type="ECO:0000303" key="8">
    <source>
    </source>
</evidence>
<evidence type="ECO:0000303" key="9">
    <source>
    </source>
</evidence>
<evidence type="ECO:0000303" key="10">
    <source>
    </source>
</evidence>
<evidence type="ECO:0000303" key="11">
    <source>
    </source>
</evidence>
<evidence type="ECO:0000303" key="12">
    <source>
    </source>
</evidence>
<evidence type="ECO:0000305" key="13"/>
<evidence type="ECO:0000312" key="14">
    <source>
        <dbReference type="Araport" id="AT4G00050"/>
    </source>
</evidence>
<evidence type="ECO:0000312" key="15">
    <source>
        <dbReference type="EMBL" id="AAC19308.1"/>
    </source>
</evidence>
<dbReference type="EMBL" id="AF488561">
    <property type="protein sequence ID" value="AAM10933.1"/>
    <property type="molecule type" value="mRNA"/>
</dbReference>
<dbReference type="EMBL" id="AF069299">
    <property type="protein sequence ID" value="AAC19308.1"/>
    <property type="status" value="ALT_SEQ"/>
    <property type="molecule type" value="Genomic_DNA"/>
</dbReference>
<dbReference type="EMBL" id="AL161471">
    <property type="protein sequence ID" value="CAB80763.1"/>
    <property type="status" value="ALT_SEQ"/>
    <property type="molecule type" value="Genomic_DNA"/>
</dbReference>
<dbReference type="EMBL" id="CP002687">
    <property type="protein sequence ID" value="AEE81818.1"/>
    <property type="molecule type" value="Genomic_DNA"/>
</dbReference>
<dbReference type="EMBL" id="AK117229">
    <property type="protein sequence ID" value="BAC41905.1"/>
    <property type="molecule type" value="mRNA"/>
</dbReference>
<dbReference type="EMBL" id="BT025971">
    <property type="protein sequence ID" value="ABG25060.1"/>
    <property type="molecule type" value="mRNA"/>
</dbReference>
<dbReference type="PIR" id="T01333">
    <property type="entry name" value="T01333"/>
</dbReference>
<dbReference type="RefSeq" id="NP_191916.3">
    <property type="nucleotide sequence ID" value="NM_116222.4"/>
</dbReference>
<dbReference type="SMR" id="Q8GZ38"/>
<dbReference type="BioGRID" id="13464">
    <property type="interactions" value="3"/>
</dbReference>
<dbReference type="FunCoup" id="Q8GZ38">
    <property type="interactions" value="343"/>
</dbReference>
<dbReference type="IntAct" id="Q8GZ38">
    <property type="interactions" value="1"/>
</dbReference>
<dbReference type="STRING" id="3702.Q8GZ38"/>
<dbReference type="PaxDb" id="3702-AT4G00050.1"/>
<dbReference type="EnsemblPlants" id="AT4G00050.1">
    <property type="protein sequence ID" value="AT4G00050.1"/>
    <property type="gene ID" value="AT4G00050"/>
</dbReference>
<dbReference type="GeneID" id="828175"/>
<dbReference type="Gramene" id="AT4G00050.1">
    <property type="protein sequence ID" value="AT4G00050.1"/>
    <property type="gene ID" value="AT4G00050"/>
</dbReference>
<dbReference type="KEGG" id="ath:AT4G00050"/>
<dbReference type="Araport" id="AT4G00050"/>
<dbReference type="TAIR" id="AT4G00050">
    <property type="gene designation" value="UNE10"/>
</dbReference>
<dbReference type="eggNOG" id="ENOG502QUQP">
    <property type="taxonomic scope" value="Eukaryota"/>
</dbReference>
<dbReference type="HOGENOM" id="CLU_044659_0_0_1"/>
<dbReference type="InParanoid" id="Q8GZ38"/>
<dbReference type="OMA" id="SSAKHCT"/>
<dbReference type="PhylomeDB" id="Q8GZ38"/>
<dbReference type="PRO" id="PR:Q8GZ38"/>
<dbReference type="Proteomes" id="UP000006548">
    <property type="component" value="Chromosome 4"/>
</dbReference>
<dbReference type="ExpressionAtlas" id="Q8GZ38">
    <property type="expression patterns" value="baseline and differential"/>
</dbReference>
<dbReference type="GO" id="GO:0005634">
    <property type="term" value="C:nucleus"/>
    <property type="evidence" value="ECO:0007669"/>
    <property type="project" value="UniProtKB-SubCell"/>
</dbReference>
<dbReference type="GO" id="GO:0009506">
    <property type="term" value="C:plasmodesma"/>
    <property type="evidence" value="ECO:0007005"/>
    <property type="project" value="TAIR"/>
</dbReference>
<dbReference type="GO" id="GO:0003700">
    <property type="term" value="F:DNA-binding transcription factor activity"/>
    <property type="evidence" value="ECO:0000314"/>
    <property type="project" value="UniProtKB"/>
</dbReference>
<dbReference type="GO" id="GO:0046983">
    <property type="term" value="F:protein dimerization activity"/>
    <property type="evidence" value="ECO:0007669"/>
    <property type="project" value="InterPro"/>
</dbReference>
<dbReference type="GO" id="GO:0043565">
    <property type="term" value="F:sequence-specific DNA binding"/>
    <property type="evidence" value="ECO:0000314"/>
    <property type="project" value="UniProtKB"/>
</dbReference>
<dbReference type="GO" id="GO:0009704">
    <property type="term" value="P:de-etiolation"/>
    <property type="evidence" value="ECO:0000315"/>
    <property type="project" value="TAIR"/>
</dbReference>
<dbReference type="GO" id="GO:0006351">
    <property type="term" value="P:DNA-templated transcription"/>
    <property type="evidence" value="ECO:0000314"/>
    <property type="project" value="TAIR"/>
</dbReference>
<dbReference type="GO" id="GO:0009567">
    <property type="term" value="P:double fertilization forming a zygote and endosperm"/>
    <property type="evidence" value="ECO:0000315"/>
    <property type="project" value="TAIR"/>
</dbReference>
<dbReference type="GO" id="GO:0009959">
    <property type="term" value="P:negative gravitropism"/>
    <property type="evidence" value="ECO:0000315"/>
    <property type="project" value="TAIR"/>
</dbReference>
<dbReference type="GO" id="GO:0010187">
    <property type="term" value="P:negative regulation of seed germination"/>
    <property type="evidence" value="ECO:0000315"/>
    <property type="project" value="TAIR"/>
</dbReference>
<dbReference type="GO" id="GO:0006355">
    <property type="term" value="P:regulation of DNA-templated transcription"/>
    <property type="evidence" value="ECO:0000304"/>
    <property type="project" value="TAIR"/>
</dbReference>
<dbReference type="GO" id="GO:0009637">
    <property type="term" value="P:response to blue light"/>
    <property type="evidence" value="ECO:0000315"/>
    <property type="project" value="TAIR"/>
</dbReference>
<dbReference type="GO" id="GO:0010218">
    <property type="term" value="P:response to far red light"/>
    <property type="evidence" value="ECO:0000315"/>
    <property type="project" value="TAIR"/>
</dbReference>
<dbReference type="GO" id="GO:0009753">
    <property type="term" value="P:response to jasmonic acid"/>
    <property type="evidence" value="ECO:0000270"/>
    <property type="project" value="UniProtKB"/>
</dbReference>
<dbReference type="GO" id="GO:0009416">
    <property type="term" value="P:response to light stimulus"/>
    <property type="evidence" value="ECO:0000315"/>
    <property type="project" value="TAIR"/>
</dbReference>
<dbReference type="GO" id="GO:0009845">
    <property type="term" value="P:seed germination"/>
    <property type="evidence" value="ECO:0000315"/>
    <property type="project" value="TAIR"/>
</dbReference>
<dbReference type="GO" id="GO:0090351">
    <property type="term" value="P:seedling development"/>
    <property type="evidence" value="ECO:0000316"/>
    <property type="project" value="TAIR"/>
</dbReference>
<dbReference type="CDD" id="cd11445">
    <property type="entry name" value="bHLH_AtPIF_like"/>
    <property type="match status" value="1"/>
</dbReference>
<dbReference type="FunFam" id="4.10.280.10:FF:000059">
    <property type="entry name" value="transcription factor UNE10 isoform X1"/>
    <property type="match status" value="1"/>
</dbReference>
<dbReference type="Gene3D" id="4.10.280.10">
    <property type="entry name" value="Helix-loop-helix DNA-binding domain"/>
    <property type="match status" value="1"/>
</dbReference>
<dbReference type="InterPro" id="IPR031066">
    <property type="entry name" value="bHLH_ALC-like_plant"/>
</dbReference>
<dbReference type="InterPro" id="IPR011598">
    <property type="entry name" value="bHLH_dom"/>
</dbReference>
<dbReference type="InterPro" id="IPR036638">
    <property type="entry name" value="HLH_DNA-bd_sf"/>
</dbReference>
<dbReference type="InterPro" id="IPR047265">
    <property type="entry name" value="PIF1-like_bHLH"/>
</dbReference>
<dbReference type="PANTHER" id="PTHR45855:SF23">
    <property type="entry name" value="TRANSCRIPTION FACTOR MEE8-RELATED"/>
    <property type="match status" value="1"/>
</dbReference>
<dbReference type="PANTHER" id="PTHR45855">
    <property type="entry name" value="TRANSCRIPTION FACTOR PIF1-RELATED"/>
    <property type="match status" value="1"/>
</dbReference>
<dbReference type="Pfam" id="PF00010">
    <property type="entry name" value="HLH"/>
    <property type="match status" value="1"/>
</dbReference>
<dbReference type="SMART" id="SM00353">
    <property type="entry name" value="HLH"/>
    <property type="match status" value="1"/>
</dbReference>
<dbReference type="SUPFAM" id="SSF47459">
    <property type="entry name" value="HLH, helix-loop-helix DNA-binding domain"/>
    <property type="match status" value="1"/>
</dbReference>
<dbReference type="PROSITE" id="PS50888">
    <property type="entry name" value="BHLH"/>
    <property type="match status" value="1"/>
</dbReference>
<accession>Q8GZ38</accession>
<accession>O81306</accession>
<accession>Q8S3F4</accession>
<sequence>MSQCVPNCHIDDTPAAATTTVRSTTAADIPILDYEVAELTWENGQLGLHGLGPPRVTASSTKYSTGAGGTLESIVDQATRLPNPKPTDELVPWFHHRSSRAAMAMDALVPCSNLVHEQQSKPGGVGSTRVGSCSDGRTMGGGKRARVAPEWSGGGSQRLTMDTYDVGFTSTSMGSHDNTIDDHDSVCHSRPQMEDEEEKKAGGKSSVSTKRSRAAAIHNQSERKRRDKINQRMKTLQKLVPNSSKTDKASMLDEVIEYLKQLQAQVSMMSRMNMPSMMLPMAMQQQQQLQMSLMSNPMGLGMGMGMPGLGLLDLNSMNRAAASAPNIHANMMPNPFLPMNCPSWDASSNDSRFQSPLIPDPMSAFLACSTQPTTMEAYSRMATLYQQMQQQLPPPSNPK</sequence>